<protein>
    <recommendedName>
        <fullName>Snake venom serine proteinase 14</fullName>
        <shortName>SVSP</shortName>
        <ecNumber>3.4.21.-</ecNumber>
    </recommendedName>
</protein>
<name>VSPE_CROAD</name>
<keyword id="KW-1015">Disulfide bond</keyword>
<keyword id="KW-0325">Glycoprotein</keyword>
<keyword id="KW-1199">Hemostasis impairing toxin</keyword>
<keyword id="KW-0378">Hydrolase</keyword>
<keyword id="KW-0645">Protease</keyword>
<keyword id="KW-0964">Secreted</keyword>
<keyword id="KW-0720">Serine protease</keyword>
<keyword id="KW-0732">Signal</keyword>
<keyword id="KW-0800">Toxin</keyword>
<keyword id="KW-0865">Zymogen</keyword>
<accession>J3SDW9</accession>
<proteinExistence type="evidence at protein level"/>
<comment type="function">
    <text evidence="1">Snake venom serine protease that may act in the hemostasis system of the prey.</text>
</comment>
<comment type="subunit">
    <text evidence="1">Monomer.</text>
</comment>
<comment type="subcellular location">
    <subcellularLocation>
        <location>Secreted</location>
    </subcellularLocation>
</comment>
<comment type="tissue specificity">
    <text>Expressed by the venom gland.</text>
</comment>
<comment type="similarity">
    <text evidence="3">Belongs to the peptidase S1 family. Snake venom subfamily.</text>
</comment>
<reference key="1">
    <citation type="journal article" date="2012" name="BMC Genomics">
        <title>The venom-gland transcriptome of the eastern diamondback rattlesnake (Crotalus adamanteus).</title>
        <authorList>
            <person name="Rokyta D.R."/>
            <person name="Lemmon A.R."/>
            <person name="Margres M.J."/>
            <person name="Aronow K."/>
        </authorList>
    </citation>
    <scope>NUCLEOTIDE SEQUENCE [MRNA]</scope>
    <source>
        <tissue>Venom gland</tissue>
    </source>
</reference>
<reference key="2">
    <citation type="journal article" date="2014" name="J. Proteomics">
        <title>Linking the transcriptome and proteome to characterize the venom of the eastern diamondback rattlesnake (Crotalus adamanteus).</title>
        <authorList>
            <person name="Margres M.J."/>
            <person name="McGivern J.J."/>
            <person name="Wray K.P."/>
            <person name="Seavy M."/>
            <person name="Calvin K."/>
            <person name="Rokyta D.R."/>
        </authorList>
    </citation>
    <scope>IDENTIFICATION BY MASS SPECTROMETRY</scope>
    <source>
        <tissue>Venom</tissue>
    </source>
</reference>
<feature type="signal peptide" evidence="2">
    <location>
        <begin position="1"/>
        <end position="18"/>
    </location>
</feature>
<feature type="propeptide" id="PRO_0000425649" evidence="1">
    <location>
        <begin position="19"/>
        <end position="24"/>
    </location>
</feature>
<feature type="chain" id="PRO_0000425650" description="Snake venom serine proteinase 14">
    <location>
        <begin position="25"/>
        <end position="253"/>
    </location>
</feature>
<feature type="domain" description="Peptidase S1" evidence="3">
    <location>
        <begin position="25"/>
        <end position="244"/>
    </location>
</feature>
<feature type="active site" description="Charge relay system" evidence="1">
    <location>
        <position position="64"/>
    </location>
</feature>
<feature type="active site" description="Charge relay system" evidence="1">
    <location>
        <position position="105"/>
    </location>
</feature>
<feature type="active site" description="Charge relay system" evidence="1">
    <location>
        <position position="199"/>
    </location>
</feature>
<feature type="glycosylation site" description="N-linked (GlcNAc...) asparagine" evidence="2">
    <location>
        <position position="116"/>
    </location>
</feature>
<feature type="glycosylation site" description="N-linked (GlcNAc...) asparagine" evidence="2">
    <location>
        <position position="117"/>
    </location>
</feature>
<feature type="glycosylation site" description="N-linked (GlcNAc...) asparagine" evidence="2">
    <location>
        <position position="149"/>
    </location>
</feature>
<feature type="disulfide bond" evidence="3">
    <location>
        <begin position="31"/>
        <end position="158"/>
    </location>
</feature>
<feature type="disulfide bond" evidence="3">
    <location>
        <begin position="49"/>
        <end position="65"/>
    </location>
</feature>
<feature type="disulfide bond" evidence="3">
    <location>
        <begin position="93"/>
        <end position="251"/>
    </location>
</feature>
<feature type="disulfide bond" evidence="3">
    <location>
        <begin position="137"/>
        <end position="205"/>
    </location>
</feature>
<feature type="disulfide bond" evidence="3">
    <location>
        <begin position="169"/>
        <end position="184"/>
    </location>
</feature>
<feature type="disulfide bond" evidence="3">
    <location>
        <begin position="195"/>
        <end position="220"/>
    </location>
</feature>
<dbReference type="EC" id="3.4.21.-"/>
<dbReference type="EMBL" id="JU173725">
    <property type="protein sequence ID" value="AFJ49251.1"/>
    <property type="molecule type" value="mRNA"/>
</dbReference>
<dbReference type="SMR" id="J3SDW9"/>
<dbReference type="GO" id="GO:0005576">
    <property type="term" value="C:extracellular region"/>
    <property type="evidence" value="ECO:0007669"/>
    <property type="project" value="UniProtKB-SubCell"/>
</dbReference>
<dbReference type="GO" id="GO:0030141">
    <property type="term" value="C:secretory granule"/>
    <property type="evidence" value="ECO:0007669"/>
    <property type="project" value="TreeGrafter"/>
</dbReference>
<dbReference type="GO" id="GO:0004252">
    <property type="term" value="F:serine-type endopeptidase activity"/>
    <property type="evidence" value="ECO:0007669"/>
    <property type="project" value="InterPro"/>
</dbReference>
<dbReference type="GO" id="GO:0090729">
    <property type="term" value="F:toxin activity"/>
    <property type="evidence" value="ECO:0007669"/>
    <property type="project" value="UniProtKB-KW"/>
</dbReference>
<dbReference type="GO" id="GO:0006508">
    <property type="term" value="P:proteolysis"/>
    <property type="evidence" value="ECO:0007669"/>
    <property type="project" value="UniProtKB-KW"/>
</dbReference>
<dbReference type="CDD" id="cd00190">
    <property type="entry name" value="Tryp_SPc"/>
    <property type="match status" value="1"/>
</dbReference>
<dbReference type="FunFam" id="2.40.10.10:FF:000158">
    <property type="entry name" value="Thrombin-like enzyme saxthrombin"/>
    <property type="match status" value="1"/>
</dbReference>
<dbReference type="Gene3D" id="2.40.10.10">
    <property type="entry name" value="Trypsin-like serine proteases"/>
    <property type="match status" value="2"/>
</dbReference>
<dbReference type="InterPro" id="IPR009003">
    <property type="entry name" value="Peptidase_S1_PA"/>
</dbReference>
<dbReference type="InterPro" id="IPR043504">
    <property type="entry name" value="Peptidase_S1_PA_chymotrypsin"/>
</dbReference>
<dbReference type="InterPro" id="IPR001314">
    <property type="entry name" value="Peptidase_S1A"/>
</dbReference>
<dbReference type="InterPro" id="IPR001254">
    <property type="entry name" value="Trypsin_dom"/>
</dbReference>
<dbReference type="InterPro" id="IPR018114">
    <property type="entry name" value="TRYPSIN_HIS"/>
</dbReference>
<dbReference type="InterPro" id="IPR033116">
    <property type="entry name" value="TRYPSIN_SER"/>
</dbReference>
<dbReference type="PANTHER" id="PTHR24271:SF47">
    <property type="entry name" value="KALLIKREIN-1"/>
    <property type="match status" value="1"/>
</dbReference>
<dbReference type="PANTHER" id="PTHR24271">
    <property type="entry name" value="KALLIKREIN-RELATED"/>
    <property type="match status" value="1"/>
</dbReference>
<dbReference type="Pfam" id="PF00089">
    <property type="entry name" value="Trypsin"/>
    <property type="match status" value="1"/>
</dbReference>
<dbReference type="PRINTS" id="PR00722">
    <property type="entry name" value="CHYMOTRYPSIN"/>
</dbReference>
<dbReference type="SMART" id="SM00020">
    <property type="entry name" value="Tryp_SPc"/>
    <property type="match status" value="1"/>
</dbReference>
<dbReference type="SUPFAM" id="SSF50494">
    <property type="entry name" value="Trypsin-like serine proteases"/>
    <property type="match status" value="1"/>
</dbReference>
<dbReference type="PROSITE" id="PS50240">
    <property type="entry name" value="TRYPSIN_DOM"/>
    <property type="match status" value="1"/>
</dbReference>
<dbReference type="PROSITE" id="PS00134">
    <property type="entry name" value="TRYPSIN_HIS"/>
    <property type="match status" value="1"/>
</dbReference>
<dbReference type="PROSITE" id="PS00135">
    <property type="entry name" value="TRYPSIN_SER"/>
    <property type="match status" value="1"/>
</dbReference>
<sequence>MVLIRVLANLLILQLSYAQKSSELVIGGDECNINEHRFLAIVHTDISLCTGTLINQEWVLTAAHCDRGDILVLLGVHRLKDVQTRVAKEKFICPNRKKDNEKDKDIMLIRLDSPVNNSTHIAPLSLPSNPPSVGSVCRIMGWGAITSPNVTFPGVPHCADINIFDYEVCRAAKPELPATSRTLCAGILEGGKGSCDGDSGGPLICNGEIQGIVSWGGDICAQPREPGHYTKVFDYTDWIQSIIAGNTDVTCPP</sequence>
<evidence type="ECO:0000250" key="1"/>
<evidence type="ECO:0000255" key="2"/>
<evidence type="ECO:0000255" key="3">
    <source>
        <dbReference type="PROSITE-ProRule" id="PRU00274"/>
    </source>
</evidence>
<organism>
    <name type="scientific">Crotalus adamanteus</name>
    <name type="common">Eastern diamondback rattlesnake</name>
    <dbReference type="NCBI Taxonomy" id="8729"/>
    <lineage>
        <taxon>Eukaryota</taxon>
        <taxon>Metazoa</taxon>
        <taxon>Chordata</taxon>
        <taxon>Craniata</taxon>
        <taxon>Vertebrata</taxon>
        <taxon>Euteleostomi</taxon>
        <taxon>Lepidosauria</taxon>
        <taxon>Squamata</taxon>
        <taxon>Bifurcata</taxon>
        <taxon>Unidentata</taxon>
        <taxon>Episquamata</taxon>
        <taxon>Toxicofera</taxon>
        <taxon>Serpentes</taxon>
        <taxon>Colubroidea</taxon>
        <taxon>Viperidae</taxon>
        <taxon>Crotalinae</taxon>
        <taxon>Crotalus</taxon>
    </lineage>
</organism>